<feature type="chain" id="PRO_1000189724" description="Zinc transport protein ZntB">
    <location>
        <begin position="1"/>
        <end position="327"/>
    </location>
</feature>
<feature type="topological domain" description="Cytoplasmic" evidence="1">
    <location>
        <begin position="1"/>
        <end position="273"/>
    </location>
</feature>
<feature type="transmembrane region" description="Helical" evidence="1">
    <location>
        <begin position="274"/>
        <end position="294"/>
    </location>
</feature>
<feature type="topological domain" description="Periplasmic" evidence="1">
    <location>
        <begin position="295"/>
        <end position="300"/>
    </location>
</feature>
<feature type="transmembrane region" description="Helical" evidence="1">
    <location>
        <begin position="301"/>
        <end position="321"/>
    </location>
</feature>
<feature type="topological domain" description="Cytoplasmic" evidence="1">
    <location>
        <begin position="322"/>
        <end position="327"/>
    </location>
</feature>
<evidence type="ECO:0000255" key="1">
    <source>
        <dbReference type="HAMAP-Rule" id="MF_01565"/>
    </source>
</evidence>
<name>ZNTB_SALA4</name>
<proteinExistence type="inferred from homology"/>
<keyword id="KW-0997">Cell inner membrane</keyword>
<keyword id="KW-1003">Cell membrane</keyword>
<keyword id="KW-0406">Ion transport</keyword>
<keyword id="KW-0472">Membrane</keyword>
<keyword id="KW-0812">Transmembrane</keyword>
<keyword id="KW-1133">Transmembrane helix</keyword>
<keyword id="KW-0813">Transport</keyword>
<keyword id="KW-0862">Zinc</keyword>
<gene>
    <name evidence="1" type="primary">zntB</name>
    <name type="ordered locus">SeAg_B1496</name>
</gene>
<accession>B5F5B8</accession>
<sequence>MEAIKGSDVNVPDAVFAWLLDGRGGVKPLEDNDVIDSQHPCWLHLNYTHPDSARWLASTPLLPNNVRDALAGESSRPRVSRMGEGTLITLRCINGSTDERPDQLVAMRLYMDERFIVSTRQRKVLALDDVVSDLQEGTGPVDCGGWLVDVCDALTDHASEFIEELHDKIIDLEDNLLDQQIPPRGFLALLRKQLIVMRRYMAPQRDVYARLASERLPWMSDDHRRRMQDIADRLGRGLDEIDACIARTGIMADEIAQVMQESLARRTYTMSLMAMVFLPSTFLTGLFGVNLGGIPGGGWRFGFSLFCILLVVLIGGVTLWLHRSKWL</sequence>
<protein>
    <recommendedName>
        <fullName evidence="1">Zinc transport protein ZntB</fullName>
    </recommendedName>
</protein>
<reference key="1">
    <citation type="journal article" date="2011" name="J. Bacteriol.">
        <title>Comparative genomics of 28 Salmonella enterica isolates: evidence for CRISPR-mediated adaptive sublineage evolution.</title>
        <authorList>
            <person name="Fricke W.F."/>
            <person name="Mammel M.K."/>
            <person name="McDermott P.F."/>
            <person name="Tartera C."/>
            <person name="White D.G."/>
            <person name="Leclerc J.E."/>
            <person name="Ravel J."/>
            <person name="Cebula T.A."/>
        </authorList>
    </citation>
    <scope>NUCLEOTIDE SEQUENCE [LARGE SCALE GENOMIC DNA]</scope>
    <source>
        <strain>SL483</strain>
    </source>
</reference>
<comment type="function">
    <text evidence="1">Zinc transporter. Acts as a Zn(2+):proton symporter, which likely mediates zinc ion uptake.</text>
</comment>
<comment type="catalytic activity">
    <reaction evidence="1">
        <text>Zn(2+)(out) + H(+)(out) = Zn(2+)(in) + H(+)(in)</text>
        <dbReference type="Rhea" id="RHEA:71195"/>
        <dbReference type="ChEBI" id="CHEBI:15378"/>
        <dbReference type="ChEBI" id="CHEBI:29105"/>
    </reaction>
    <physiologicalReaction direction="left-to-right" evidence="1">
        <dbReference type="Rhea" id="RHEA:71196"/>
    </physiologicalReaction>
</comment>
<comment type="subcellular location">
    <subcellularLocation>
        <location evidence="1">Cell inner membrane</location>
        <topology evidence="1">Multi-pass membrane protein</topology>
    </subcellularLocation>
</comment>
<comment type="similarity">
    <text evidence="1">Belongs to the CorA metal ion transporter (MIT) (TC 1.A.35) family.</text>
</comment>
<organism>
    <name type="scientific">Salmonella agona (strain SL483)</name>
    <dbReference type="NCBI Taxonomy" id="454166"/>
    <lineage>
        <taxon>Bacteria</taxon>
        <taxon>Pseudomonadati</taxon>
        <taxon>Pseudomonadota</taxon>
        <taxon>Gammaproteobacteria</taxon>
        <taxon>Enterobacterales</taxon>
        <taxon>Enterobacteriaceae</taxon>
        <taxon>Salmonella</taxon>
    </lineage>
</organism>
<dbReference type="EMBL" id="CP001138">
    <property type="protein sequence ID" value="ACH50954.1"/>
    <property type="molecule type" value="Genomic_DNA"/>
</dbReference>
<dbReference type="RefSeq" id="WP_000387373.1">
    <property type="nucleotide sequence ID" value="NC_011149.1"/>
</dbReference>
<dbReference type="SMR" id="B5F5B8"/>
<dbReference type="KEGG" id="sea:SeAg_B1496"/>
<dbReference type="HOGENOM" id="CLU_007127_2_0_6"/>
<dbReference type="Proteomes" id="UP000008819">
    <property type="component" value="Chromosome"/>
</dbReference>
<dbReference type="GO" id="GO:0005886">
    <property type="term" value="C:plasma membrane"/>
    <property type="evidence" value="ECO:0007669"/>
    <property type="project" value="UniProtKB-SubCell"/>
</dbReference>
<dbReference type="GO" id="GO:0050897">
    <property type="term" value="F:cobalt ion binding"/>
    <property type="evidence" value="ECO:0007669"/>
    <property type="project" value="TreeGrafter"/>
</dbReference>
<dbReference type="GO" id="GO:0015087">
    <property type="term" value="F:cobalt ion transmembrane transporter activity"/>
    <property type="evidence" value="ECO:0007669"/>
    <property type="project" value="TreeGrafter"/>
</dbReference>
<dbReference type="GO" id="GO:0000287">
    <property type="term" value="F:magnesium ion binding"/>
    <property type="evidence" value="ECO:0007669"/>
    <property type="project" value="TreeGrafter"/>
</dbReference>
<dbReference type="GO" id="GO:0015095">
    <property type="term" value="F:magnesium ion transmembrane transporter activity"/>
    <property type="evidence" value="ECO:0007669"/>
    <property type="project" value="TreeGrafter"/>
</dbReference>
<dbReference type="GO" id="GO:0005385">
    <property type="term" value="F:zinc ion transmembrane transporter activity"/>
    <property type="evidence" value="ECO:0007669"/>
    <property type="project" value="UniProtKB-UniRule"/>
</dbReference>
<dbReference type="CDD" id="cd12833">
    <property type="entry name" value="ZntB-like_1"/>
    <property type="match status" value="1"/>
</dbReference>
<dbReference type="FunFam" id="1.20.58.340:FF:000002">
    <property type="entry name" value="Zinc transport protein ZntB"/>
    <property type="match status" value="1"/>
</dbReference>
<dbReference type="FunFam" id="3.30.460.20:FF:000001">
    <property type="entry name" value="Zinc transport protein ZntB"/>
    <property type="match status" value="1"/>
</dbReference>
<dbReference type="Gene3D" id="3.30.460.20">
    <property type="entry name" value="CorA soluble domain-like"/>
    <property type="match status" value="1"/>
</dbReference>
<dbReference type="Gene3D" id="1.20.58.340">
    <property type="entry name" value="Magnesium transport protein CorA, transmembrane region"/>
    <property type="match status" value="2"/>
</dbReference>
<dbReference type="HAMAP" id="MF_01565">
    <property type="entry name" value="ZntB"/>
    <property type="match status" value="1"/>
</dbReference>
<dbReference type="InterPro" id="IPR045861">
    <property type="entry name" value="CorA_cytoplasmic_dom"/>
</dbReference>
<dbReference type="InterPro" id="IPR045863">
    <property type="entry name" value="CorA_TM1_TM2"/>
</dbReference>
<dbReference type="InterPro" id="IPR002523">
    <property type="entry name" value="MgTranspt_CorA/ZnTranspt_ZntB"/>
</dbReference>
<dbReference type="InterPro" id="IPR023714">
    <property type="entry name" value="Zn_transp_ZntB"/>
</dbReference>
<dbReference type="NCBIfam" id="NF007092">
    <property type="entry name" value="PRK09546.1"/>
    <property type="match status" value="1"/>
</dbReference>
<dbReference type="PANTHER" id="PTHR46494">
    <property type="entry name" value="CORA FAMILY METAL ION TRANSPORTER (EUROFUNG)"/>
    <property type="match status" value="1"/>
</dbReference>
<dbReference type="PANTHER" id="PTHR46494:SF3">
    <property type="entry name" value="ZINC TRANSPORT PROTEIN ZNTB"/>
    <property type="match status" value="1"/>
</dbReference>
<dbReference type="Pfam" id="PF01544">
    <property type="entry name" value="CorA"/>
    <property type="match status" value="1"/>
</dbReference>
<dbReference type="SUPFAM" id="SSF143865">
    <property type="entry name" value="CorA soluble domain-like"/>
    <property type="match status" value="1"/>
</dbReference>
<dbReference type="SUPFAM" id="SSF144083">
    <property type="entry name" value="Magnesium transport protein CorA, transmembrane region"/>
    <property type="match status" value="1"/>
</dbReference>